<evidence type="ECO:0000255" key="1">
    <source>
        <dbReference type="HAMAP-Rule" id="MF_00506"/>
    </source>
</evidence>
<protein>
    <recommendedName>
        <fullName evidence="1">UPF0180 protein Bcer98_1118</fullName>
    </recommendedName>
</protein>
<dbReference type="EMBL" id="CP000764">
    <property type="protein sequence ID" value="ABS21444.1"/>
    <property type="molecule type" value="Genomic_DNA"/>
</dbReference>
<dbReference type="RefSeq" id="WP_011984197.1">
    <property type="nucleotide sequence ID" value="NC_009674.1"/>
</dbReference>
<dbReference type="STRING" id="315749.Bcer98_1118"/>
<dbReference type="GeneID" id="33896474"/>
<dbReference type="KEGG" id="bcy:Bcer98_1118"/>
<dbReference type="eggNOG" id="ENOG503307C">
    <property type="taxonomic scope" value="Bacteria"/>
</dbReference>
<dbReference type="HOGENOM" id="CLU_187365_0_0_9"/>
<dbReference type="OrthoDB" id="1708042at2"/>
<dbReference type="Proteomes" id="UP000002300">
    <property type="component" value="Chromosome"/>
</dbReference>
<dbReference type="HAMAP" id="MF_00506">
    <property type="entry name" value="UPF0180"/>
    <property type="match status" value="1"/>
</dbReference>
<dbReference type="InterPro" id="IPR005370">
    <property type="entry name" value="UPF0180"/>
</dbReference>
<dbReference type="NCBIfam" id="NF002845">
    <property type="entry name" value="PRK03094.1"/>
    <property type="match status" value="1"/>
</dbReference>
<dbReference type="Pfam" id="PF03698">
    <property type="entry name" value="UPF0180"/>
    <property type="match status" value="1"/>
</dbReference>
<sequence length="79" mass="8345">MAKIGVESSLTDVQQALQQKGHEVISLQSESDAKECDCCVITGQDSNVMGISDVSTKGSVIKASGLTTDEICQQVESRV</sequence>
<accession>A7GMT6</accession>
<feature type="chain" id="PRO_1000081531" description="UPF0180 protein Bcer98_1118">
    <location>
        <begin position="1"/>
        <end position="79"/>
    </location>
</feature>
<proteinExistence type="inferred from homology"/>
<name>Y1118_BACCN</name>
<reference key="1">
    <citation type="journal article" date="2008" name="Chem. Biol. Interact.">
        <title>Extending the Bacillus cereus group genomics to putative food-borne pathogens of different toxicity.</title>
        <authorList>
            <person name="Lapidus A."/>
            <person name="Goltsman E."/>
            <person name="Auger S."/>
            <person name="Galleron N."/>
            <person name="Segurens B."/>
            <person name="Dossat C."/>
            <person name="Land M.L."/>
            <person name="Broussolle V."/>
            <person name="Brillard J."/>
            <person name="Guinebretiere M.-H."/>
            <person name="Sanchis V."/>
            <person name="Nguen-the C."/>
            <person name="Lereclus D."/>
            <person name="Richardson P."/>
            <person name="Wincker P."/>
            <person name="Weissenbach J."/>
            <person name="Ehrlich S.D."/>
            <person name="Sorokin A."/>
        </authorList>
    </citation>
    <scope>NUCLEOTIDE SEQUENCE [LARGE SCALE GENOMIC DNA]</scope>
    <source>
        <strain>DSM 22905 / CIP 110041 / 391-98 / NVH 391-98</strain>
    </source>
</reference>
<gene>
    <name type="ordered locus">Bcer98_1118</name>
</gene>
<organism>
    <name type="scientific">Bacillus cytotoxicus (strain DSM 22905 / CIP 110041 / 391-98 / NVH 391-98)</name>
    <dbReference type="NCBI Taxonomy" id="315749"/>
    <lineage>
        <taxon>Bacteria</taxon>
        <taxon>Bacillati</taxon>
        <taxon>Bacillota</taxon>
        <taxon>Bacilli</taxon>
        <taxon>Bacillales</taxon>
        <taxon>Bacillaceae</taxon>
        <taxon>Bacillus</taxon>
        <taxon>Bacillus cereus group</taxon>
    </lineage>
</organism>
<comment type="similarity">
    <text evidence="1">Belongs to the UPF0180 family.</text>
</comment>